<reference key="1">
    <citation type="journal article" date="2005" name="Nucleic Acids Res.">
        <title>Genome dynamics and diversity of Shigella species, the etiologic agents of bacillary dysentery.</title>
        <authorList>
            <person name="Yang F."/>
            <person name="Yang J."/>
            <person name="Zhang X."/>
            <person name="Chen L."/>
            <person name="Jiang Y."/>
            <person name="Yan Y."/>
            <person name="Tang X."/>
            <person name="Wang J."/>
            <person name="Xiong Z."/>
            <person name="Dong J."/>
            <person name="Xue Y."/>
            <person name="Zhu Y."/>
            <person name="Xu X."/>
            <person name="Sun L."/>
            <person name="Chen S."/>
            <person name="Nie H."/>
            <person name="Peng J."/>
            <person name="Xu J."/>
            <person name="Wang Y."/>
            <person name="Yuan Z."/>
            <person name="Wen Y."/>
            <person name="Yao Z."/>
            <person name="Shen Y."/>
            <person name="Qiang B."/>
            <person name="Hou Y."/>
            <person name="Yu J."/>
            <person name="Jin Q."/>
        </authorList>
    </citation>
    <scope>NUCLEOTIDE SEQUENCE [LARGE SCALE GENOMIC DNA]</scope>
    <source>
        <strain>Sb227</strain>
    </source>
</reference>
<organism>
    <name type="scientific">Shigella boydii serotype 4 (strain Sb227)</name>
    <dbReference type="NCBI Taxonomy" id="300268"/>
    <lineage>
        <taxon>Bacteria</taxon>
        <taxon>Pseudomonadati</taxon>
        <taxon>Pseudomonadota</taxon>
        <taxon>Gammaproteobacteria</taxon>
        <taxon>Enterobacterales</taxon>
        <taxon>Enterobacteriaceae</taxon>
        <taxon>Shigella</taxon>
    </lineage>
</organism>
<dbReference type="EMBL" id="CP000036">
    <property type="protein sequence ID" value="ABB67413.1"/>
    <property type="status" value="ALT_INIT"/>
    <property type="molecule type" value="Genomic_DNA"/>
</dbReference>
<dbReference type="RefSeq" id="WP_000831553.1">
    <property type="nucleotide sequence ID" value="NC_007613.1"/>
</dbReference>
<dbReference type="SMR" id="Q31WZ5"/>
<dbReference type="KEGG" id="sbo:SBO_2895"/>
<dbReference type="HOGENOM" id="CLU_095624_0_0_6"/>
<dbReference type="Proteomes" id="UP000007067">
    <property type="component" value="Chromosome"/>
</dbReference>
<dbReference type="HAMAP" id="MF_01188">
    <property type="entry name" value="UPF0441"/>
    <property type="match status" value="1"/>
</dbReference>
<dbReference type="InterPro" id="IPR009576">
    <property type="entry name" value="Biofilm_formation_YgiB"/>
</dbReference>
<dbReference type="NCBIfam" id="NF008655">
    <property type="entry name" value="PRK11653.1"/>
    <property type="match status" value="1"/>
</dbReference>
<dbReference type="Pfam" id="PF06693">
    <property type="entry name" value="DUF1190"/>
    <property type="match status" value="1"/>
</dbReference>
<accession>Q31WZ5</accession>
<evidence type="ECO:0000255" key="1">
    <source>
        <dbReference type="HAMAP-Rule" id="MF_01188"/>
    </source>
</evidence>
<evidence type="ECO:0000256" key="2">
    <source>
        <dbReference type="SAM" id="MobiDB-lite"/>
    </source>
</evidence>
<evidence type="ECO:0000305" key="3"/>
<protein>
    <recommendedName>
        <fullName evidence="1">UPF0441 protein YgiB</fullName>
    </recommendedName>
</protein>
<feature type="chain" id="PRO_0000293643" description="UPF0441 protein YgiB">
    <location>
        <begin position="1"/>
        <end position="223"/>
    </location>
</feature>
<feature type="region of interest" description="Disordered" evidence="2">
    <location>
        <begin position="178"/>
        <end position="223"/>
    </location>
</feature>
<feature type="compositionally biased region" description="Low complexity" evidence="2">
    <location>
        <begin position="178"/>
        <end position="195"/>
    </location>
</feature>
<feature type="compositionally biased region" description="Polar residues" evidence="2">
    <location>
        <begin position="204"/>
        <end position="223"/>
    </location>
</feature>
<sequence>MKRTKSIRHASFRKNWSARHLTPVALAVATVFMLASCEKSDETVSLYQNADDCSAANPGKSAECTTAYNNALKEAERTAPKYATREDCVAEFGEGQCQQAPAQAGMAPENQAQAQQSSGSFWMPLMAGYMMGRLMGGGAGFAQQPLFSSKNPASPAYGKYTDATGKNYGAAQPGRTMTVPKTAMAPKPATTTTVTRGGFGESIAKQSTMQRSATGTSSRSMGG</sequence>
<comment type="similarity">
    <text evidence="1">Belongs to the UPF0441 family.</text>
</comment>
<comment type="sequence caution" evidence="3">
    <conflict type="erroneous initiation">
        <sequence resource="EMBL-CDS" id="ABB67413"/>
    </conflict>
</comment>
<name>YGIB_SHIBS</name>
<proteinExistence type="inferred from homology"/>
<gene>
    <name evidence="1" type="primary">ygiB</name>
    <name type="ordered locus">SBO_2895</name>
</gene>